<accession>Q0GNC1</accession>
<accession>Q14C56</accession>
<accession>Q499F7</accession>
<accession>Q6P9T3</accession>
<reference key="1">
    <citation type="journal article" date="2006" name="J. Biol. Chem.">
        <title>INF2 is a WASP homology 2 motif-containing formin that severs actin filaments and accelerates both polymerization and depolymerization.</title>
        <authorList>
            <person name="Chhabra E.S."/>
            <person name="Higgs H.N."/>
        </authorList>
    </citation>
    <scope>NUCLEOTIDE SEQUENCE [MRNA] (ISOFORM 1)</scope>
    <scope>FUNCTION</scope>
    <scope>SUBUNIT</scope>
    <scope>DOMAIN</scope>
    <scope>ACTIVITY REGULATION</scope>
    <scope>MUTAGENESIS OF LEU-1009; LEU-1010 AND LEU-1019</scope>
    <source>
        <strain>BALB/cJ</strain>
    </source>
</reference>
<reference key="2">
    <citation type="journal article" date="2004" name="Genome Res.">
        <title>The status, quality, and expansion of the NIH full-length cDNA project: the Mammalian Gene Collection (MGC).</title>
        <authorList>
            <consortium name="The MGC Project Team"/>
        </authorList>
    </citation>
    <scope>NUCLEOTIDE SEQUENCE [LARGE SCALE MRNA] OF 546-1273 (ISOFORM 2)</scope>
    <scope>NUCLEOTIDE SEQUENCE [LARGE SCALE MRNA] OF 556-1273 (ISOFORM 1)</scope>
    <source>
        <strain>C3H/He</strain>
        <strain>C57BL/6J</strain>
        <tissue>Mesenchymal stem cell</tissue>
    </source>
</reference>
<reference key="3">
    <citation type="journal article" date="2007" name="Proc. Natl. Acad. Sci. U.S.A.">
        <title>Large-scale phosphorylation analysis of mouse liver.</title>
        <authorList>
            <person name="Villen J."/>
            <person name="Beausoleil S.A."/>
            <person name="Gerber S.A."/>
            <person name="Gygi S.P."/>
        </authorList>
    </citation>
    <scope>IDENTIFICATION BY MASS SPECTROMETRY [LARGE SCALE ANALYSIS]</scope>
    <source>
        <tissue>Liver</tissue>
    </source>
</reference>
<reference key="4">
    <citation type="journal article" date="2009" name="Immunity">
        <title>The phagosomal proteome in interferon-gamma-activated macrophages.</title>
        <authorList>
            <person name="Trost M."/>
            <person name="English L."/>
            <person name="Lemieux S."/>
            <person name="Courcelles M."/>
            <person name="Desjardins M."/>
            <person name="Thibault P."/>
        </authorList>
    </citation>
    <scope>PHOSPHORYLATION [LARGE SCALE ANALYSIS] AT SER-1172 AND SER-1174</scope>
    <scope>IDENTIFICATION BY MASS SPECTROMETRY [LARGE SCALE ANALYSIS]</scope>
</reference>
<reference key="5">
    <citation type="journal article" date="2010" name="Cell">
        <title>A tissue-specific atlas of mouse protein phosphorylation and expression.</title>
        <authorList>
            <person name="Huttlin E.L."/>
            <person name="Jedrychowski M.P."/>
            <person name="Elias J.E."/>
            <person name="Goswami T."/>
            <person name="Rad R."/>
            <person name="Beausoleil S.A."/>
            <person name="Villen J."/>
            <person name="Haas W."/>
            <person name="Sowa M.E."/>
            <person name="Gygi S.P."/>
        </authorList>
    </citation>
    <scope>PHOSPHORYLATION [LARGE SCALE ANALYSIS] AT THR-1203; THR-1223 AND THR-1230</scope>
    <scope>IDENTIFICATION BY MASS SPECTROMETRY [LARGE SCALE ANALYSIS]</scope>
    <source>
        <tissue>Brain</tissue>
        <tissue>Brown adipose tissue</tissue>
        <tissue>Kidney</tissue>
        <tissue>Liver</tissue>
        <tissue>Lung</tissue>
        <tissue>Spleen</tissue>
    </source>
</reference>
<organism>
    <name type="scientific">Mus musculus</name>
    <name type="common">Mouse</name>
    <dbReference type="NCBI Taxonomy" id="10090"/>
    <lineage>
        <taxon>Eukaryota</taxon>
        <taxon>Metazoa</taxon>
        <taxon>Chordata</taxon>
        <taxon>Craniata</taxon>
        <taxon>Vertebrata</taxon>
        <taxon>Euteleostomi</taxon>
        <taxon>Mammalia</taxon>
        <taxon>Eutheria</taxon>
        <taxon>Euarchontoglires</taxon>
        <taxon>Glires</taxon>
        <taxon>Rodentia</taxon>
        <taxon>Myomorpha</taxon>
        <taxon>Muroidea</taxon>
        <taxon>Muridae</taxon>
        <taxon>Murinae</taxon>
        <taxon>Mus</taxon>
        <taxon>Mus</taxon>
    </lineage>
</organism>
<protein>
    <recommendedName>
        <fullName>Inverted formin-2</fullName>
    </recommendedName>
</protein>
<name>INF2_MOUSE</name>
<dbReference type="EMBL" id="DQ834374">
    <property type="protein sequence ID" value="ABI20145.1"/>
    <property type="molecule type" value="mRNA"/>
</dbReference>
<dbReference type="EMBL" id="BC060610">
    <property type="protein sequence ID" value="AAH60610.1"/>
    <property type="status" value="ALT_INIT"/>
    <property type="molecule type" value="mRNA"/>
</dbReference>
<dbReference type="EMBL" id="BC099931">
    <property type="protein sequence ID" value="AAH99931.1"/>
    <property type="status" value="ALT_INIT"/>
    <property type="molecule type" value="mRNA"/>
</dbReference>
<dbReference type="EMBL" id="BC115422">
    <property type="protein sequence ID" value="AAI15423.2"/>
    <property type="molecule type" value="mRNA"/>
</dbReference>
<dbReference type="EMBL" id="BC115423">
    <property type="protein sequence ID" value="AAI15424.2"/>
    <property type="molecule type" value="mRNA"/>
</dbReference>
<dbReference type="RefSeq" id="NP_940803.2">
    <property type="nucleotide sequence ID" value="NM_198411.2"/>
</dbReference>
<dbReference type="SMR" id="Q0GNC1"/>
<dbReference type="BioGRID" id="214049">
    <property type="interactions" value="7"/>
</dbReference>
<dbReference type="DIP" id="DIP-61548N"/>
<dbReference type="FunCoup" id="Q0GNC1">
    <property type="interactions" value="318"/>
</dbReference>
<dbReference type="IntAct" id="Q0GNC1">
    <property type="interactions" value="3"/>
</dbReference>
<dbReference type="STRING" id="10090.ENSMUSP00000098591"/>
<dbReference type="GlyGen" id="Q0GNC1">
    <property type="glycosylation" value="5 sites, 1 O-linked glycan (2 sites)"/>
</dbReference>
<dbReference type="iPTMnet" id="Q0GNC1"/>
<dbReference type="PhosphoSitePlus" id="Q0GNC1"/>
<dbReference type="jPOST" id="Q0GNC1"/>
<dbReference type="PaxDb" id="10090-ENSMUSP00000098591"/>
<dbReference type="PeptideAtlas" id="Q0GNC1"/>
<dbReference type="ProteomicsDB" id="269405">
    <molecule id="Q0GNC1-1"/>
</dbReference>
<dbReference type="ProteomicsDB" id="269406">
    <molecule id="Q0GNC1-3"/>
</dbReference>
<dbReference type="Pumba" id="Q0GNC1"/>
<dbReference type="DNASU" id="70435"/>
<dbReference type="GeneID" id="70435"/>
<dbReference type="KEGG" id="mmu:70435"/>
<dbReference type="AGR" id="MGI:1917685"/>
<dbReference type="CTD" id="64423"/>
<dbReference type="MGI" id="MGI:1917685">
    <property type="gene designation" value="Inf2"/>
</dbReference>
<dbReference type="eggNOG" id="KOG1922">
    <property type="taxonomic scope" value="Eukaryota"/>
</dbReference>
<dbReference type="InParanoid" id="Q0GNC1"/>
<dbReference type="OrthoDB" id="26518at2759"/>
<dbReference type="PhylomeDB" id="Q0GNC1"/>
<dbReference type="BioGRID-ORCS" id="70435">
    <property type="hits" value="3 hits in 79 CRISPR screens"/>
</dbReference>
<dbReference type="ChiTaRS" id="Inf2">
    <property type="organism name" value="mouse"/>
</dbReference>
<dbReference type="PRO" id="PR:Q0GNC1"/>
<dbReference type="Proteomes" id="UP000000589">
    <property type="component" value="Unplaced"/>
</dbReference>
<dbReference type="RNAct" id="Q0GNC1">
    <property type="molecule type" value="protein"/>
</dbReference>
<dbReference type="GO" id="GO:0048471">
    <property type="term" value="C:perinuclear region of cytoplasm"/>
    <property type="evidence" value="ECO:0007669"/>
    <property type="project" value="UniProtKB-SubCell"/>
</dbReference>
<dbReference type="GO" id="GO:0003779">
    <property type="term" value="F:actin binding"/>
    <property type="evidence" value="ECO:0007669"/>
    <property type="project" value="UniProtKB-KW"/>
</dbReference>
<dbReference type="GO" id="GO:0031267">
    <property type="term" value="F:small GTPase binding"/>
    <property type="evidence" value="ECO:0007669"/>
    <property type="project" value="InterPro"/>
</dbReference>
<dbReference type="GO" id="GO:0045010">
    <property type="term" value="P:actin nucleation"/>
    <property type="evidence" value="ECO:0000314"/>
    <property type="project" value="MGI"/>
</dbReference>
<dbReference type="GO" id="GO:0010467">
    <property type="term" value="P:gene expression"/>
    <property type="evidence" value="ECO:0000314"/>
    <property type="project" value="MGI"/>
</dbReference>
<dbReference type="GO" id="GO:0032535">
    <property type="term" value="P:regulation of cellular component size"/>
    <property type="evidence" value="ECO:0000315"/>
    <property type="project" value="MGI"/>
</dbReference>
<dbReference type="GO" id="GO:0090140">
    <property type="term" value="P:regulation of mitochondrial fission"/>
    <property type="evidence" value="ECO:0000266"/>
    <property type="project" value="MGI"/>
</dbReference>
<dbReference type="CDD" id="cd22061">
    <property type="entry name" value="WH2_INF2"/>
    <property type="match status" value="1"/>
</dbReference>
<dbReference type="FunFam" id="1.20.58.2220:FF:000011">
    <property type="entry name" value="Inverted formin, FH2 and WH2 domain containing"/>
    <property type="match status" value="1"/>
</dbReference>
<dbReference type="FunFam" id="1.25.10.10:FF:000220">
    <property type="entry name" value="inverted formin-2 isoform X2"/>
    <property type="match status" value="1"/>
</dbReference>
<dbReference type="Gene3D" id="1.20.58.2220">
    <property type="entry name" value="Formin, FH2 domain"/>
    <property type="match status" value="1"/>
</dbReference>
<dbReference type="Gene3D" id="1.25.10.10">
    <property type="entry name" value="Leucine-rich Repeat Variant"/>
    <property type="match status" value="1"/>
</dbReference>
<dbReference type="InterPro" id="IPR011989">
    <property type="entry name" value="ARM-like"/>
</dbReference>
<dbReference type="InterPro" id="IPR016024">
    <property type="entry name" value="ARM-type_fold"/>
</dbReference>
<dbReference type="InterPro" id="IPR015425">
    <property type="entry name" value="FH2_Formin"/>
</dbReference>
<dbReference type="InterPro" id="IPR042201">
    <property type="entry name" value="FH2_Formin_sf"/>
</dbReference>
<dbReference type="InterPro" id="IPR010472">
    <property type="entry name" value="FH3_dom"/>
</dbReference>
<dbReference type="InterPro" id="IPR014768">
    <property type="entry name" value="GBD/FH3_dom"/>
</dbReference>
<dbReference type="InterPro" id="IPR010473">
    <property type="entry name" value="GTPase-bd"/>
</dbReference>
<dbReference type="InterPro" id="IPR003124">
    <property type="entry name" value="WH2_dom"/>
</dbReference>
<dbReference type="PANTHER" id="PTHR46345">
    <property type="entry name" value="INVERTED FORMIN-2"/>
    <property type="match status" value="1"/>
</dbReference>
<dbReference type="PANTHER" id="PTHR46345:SF5">
    <property type="entry name" value="INVERTED FORMIN-2"/>
    <property type="match status" value="1"/>
</dbReference>
<dbReference type="Pfam" id="PF06367">
    <property type="entry name" value="Drf_FH3"/>
    <property type="match status" value="1"/>
</dbReference>
<dbReference type="Pfam" id="PF06371">
    <property type="entry name" value="Drf_GBD"/>
    <property type="match status" value="1"/>
</dbReference>
<dbReference type="Pfam" id="PF02181">
    <property type="entry name" value="FH2"/>
    <property type="match status" value="1"/>
</dbReference>
<dbReference type="Pfam" id="PF02205">
    <property type="entry name" value="WH2"/>
    <property type="match status" value="1"/>
</dbReference>
<dbReference type="PRINTS" id="PR01217">
    <property type="entry name" value="PRICHEXTENSN"/>
</dbReference>
<dbReference type="SMART" id="SM01139">
    <property type="entry name" value="Drf_FH3"/>
    <property type="match status" value="1"/>
</dbReference>
<dbReference type="SMART" id="SM01140">
    <property type="entry name" value="Drf_GBD"/>
    <property type="match status" value="1"/>
</dbReference>
<dbReference type="SMART" id="SM00498">
    <property type="entry name" value="FH2"/>
    <property type="match status" value="1"/>
</dbReference>
<dbReference type="SUPFAM" id="SSF48371">
    <property type="entry name" value="ARM repeat"/>
    <property type="match status" value="1"/>
</dbReference>
<dbReference type="SUPFAM" id="SSF101447">
    <property type="entry name" value="Formin homology 2 domain (FH2 domain)"/>
    <property type="match status" value="1"/>
</dbReference>
<dbReference type="PROSITE" id="PS51444">
    <property type="entry name" value="FH2"/>
    <property type="match status" value="1"/>
</dbReference>
<dbReference type="PROSITE" id="PS51232">
    <property type="entry name" value="GBD_FH3"/>
    <property type="match status" value="1"/>
</dbReference>
<dbReference type="PROSITE" id="PS51082">
    <property type="entry name" value="WH2"/>
    <property type="match status" value="1"/>
</dbReference>
<keyword id="KW-0007">Acetylation</keyword>
<keyword id="KW-0009">Actin-binding</keyword>
<keyword id="KW-0025">Alternative splicing</keyword>
<keyword id="KW-0175">Coiled coil</keyword>
<keyword id="KW-0963">Cytoplasm</keyword>
<keyword id="KW-0597">Phosphoprotein</keyword>
<keyword id="KW-1185">Reference proteome</keyword>
<gene>
    <name type="primary">Inf2</name>
</gene>
<feature type="initiator methionine" description="Removed" evidence="2">
    <location>
        <position position="1"/>
    </location>
</feature>
<feature type="chain" id="PRO_0000259890" description="Inverted formin-2">
    <location>
        <begin position="2"/>
        <end position="1273"/>
    </location>
</feature>
<feature type="domain" description="GBD/FH3" evidence="5">
    <location>
        <begin position="2"/>
        <end position="330"/>
    </location>
</feature>
<feature type="domain" description="FH1">
    <location>
        <begin position="421"/>
        <end position="564"/>
    </location>
</feature>
<feature type="domain" description="FH2" evidence="6">
    <location>
        <begin position="589"/>
        <end position="979"/>
    </location>
</feature>
<feature type="domain" description="WH2" evidence="4">
    <location>
        <begin position="1007"/>
        <end position="1022"/>
    </location>
</feature>
<feature type="region of interest" description="Disordered" evidence="7">
    <location>
        <begin position="1"/>
        <end position="30"/>
    </location>
</feature>
<feature type="region of interest" description="Disordered" evidence="7">
    <location>
        <begin position="346"/>
        <end position="387"/>
    </location>
</feature>
<feature type="region of interest" description="Disordered" evidence="7">
    <location>
        <begin position="427"/>
        <end position="559"/>
    </location>
</feature>
<feature type="region of interest" description="Disordered" evidence="7">
    <location>
        <begin position="960"/>
        <end position="999"/>
    </location>
</feature>
<feature type="region of interest" description="Disordered" evidence="7">
    <location>
        <begin position="1021"/>
        <end position="1273"/>
    </location>
</feature>
<feature type="coiled-coil region" evidence="3">
    <location>
        <begin position="907"/>
        <end position="984"/>
    </location>
</feature>
<feature type="compositionally biased region" description="Low complexity" evidence="7">
    <location>
        <begin position="359"/>
        <end position="382"/>
    </location>
</feature>
<feature type="compositionally biased region" description="Pro residues" evidence="7">
    <location>
        <begin position="433"/>
        <end position="516"/>
    </location>
</feature>
<feature type="compositionally biased region" description="Pro residues" evidence="7">
    <location>
        <begin position="524"/>
        <end position="558"/>
    </location>
</feature>
<feature type="compositionally biased region" description="Polar residues" evidence="7">
    <location>
        <begin position="1047"/>
        <end position="1059"/>
    </location>
</feature>
<feature type="compositionally biased region" description="Basic and acidic residues" evidence="7">
    <location>
        <begin position="1088"/>
        <end position="1101"/>
    </location>
</feature>
<feature type="compositionally biased region" description="Acidic residues" evidence="7">
    <location>
        <begin position="1195"/>
        <end position="1204"/>
    </location>
</feature>
<feature type="compositionally biased region" description="Basic residues" evidence="7">
    <location>
        <begin position="1242"/>
        <end position="1251"/>
    </location>
</feature>
<feature type="modified residue" description="N-acetylserine" evidence="2">
    <location>
        <position position="2"/>
    </location>
</feature>
<feature type="modified residue" description="Phosphoserine" evidence="2">
    <location>
        <position position="351"/>
    </location>
</feature>
<feature type="modified residue" description="Phosphoserine" evidence="11">
    <location>
        <position position="1172"/>
    </location>
</feature>
<feature type="modified residue" description="Phosphoserine" evidence="11">
    <location>
        <position position="1174"/>
    </location>
</feature>
<feature type="modified residue" description="Phosphothreonine" evidence="12">
    <location>
        <position position="1203"/>
    </location>
</feature>
<feature type="modified residue" description="Phosphoserine" evidence="2">
    <location>
        <position position="1216"/>
    </location>
</feature>
<feature type="modified residue" description="Phosphoserine" evidence="2">
    <location>
        <position position="1218"/>
    </location>
</feature>
<feature type="modified residue" description="Phosphothreonine" evidence="12">
    <location>
        <position position="1223"/>
    </location>
</feature>
<feature type="modified residue" description="Phosphothreonine" evidence="12">
    <location>
        <position position="1230"/>
    </location>
</feature>
<feature type="splice variant" id="VSP_021560" description="In isoform 2." evidence="9">
    <original>EFVPDSDDIKAKRLCVIQ</original>
    <variation>GLRSRPKAK</variation>
    <location>
        <begin position="1256"/>
        <end position="1273"/>
    </location>
</feature>
<feature type="mutagenesis site" description="Strongly inhibits depolymerization; when associated with A-1010 and A-1019." evidence="8">
    <original>L</original>
    <variation>A</variation>
    <location>
        <position position="1009"/>
    </location>
</feature>
<feature type="mutagenesis site" description="Strongly inhibits depolymerization; when associated with A-1009 and A-1019." evidence="8">
    <original>L</original>
    <variation>A</variation>
    <location>
        <position position="1010"/>
    </location>
</feature>
<feature type="mutagenesis site" description="Strongly inhibits depolymerization; when associated with A-1009 and A-1010." evidence="8">
    <original>L</original>
    <variation>A</variation>
    <location>
        <position position="1019"/>
    </location>
</feature>
<feature type="sequence conflict" description="In Ref. 2; AAH60610/AAI15423." evidence="10" ref="2">
    <original>T</original>
    <variation>A</variation>
    <location>
        <position position="1038"/>
    </location>
</feature>
<feature type="sequence conflict" description="In Ref. 2; AAH60610/AAI15423." evidence="10" ref="2">
    <original>Q</original>
    <variation>R</variation>
    <location>
        <position position="1167"/>
    </location>
</feature>
<sequence length="1273" mass="138560">MSVKEGAQRKWAALKEKLGPQDSDPTEANLESAEPELCIRLLQMPSVVNYSGLRKRLESSDGGWMVQFLEQSGLDLLLEALARLSGRGVARISDALLQLTCISCVRAVMNSQQGIEYILSNQGYVRQLSQALDTSNVMVKKQVFELLAALCIYSPEGHALTLDALDHYKMVCSQQYRFSVIMSELSDSDNVPYVVTLLSVINAIILGPEDLRSRAQLRSEFIGLQLLDILTRLRDLEDADLLIQLEAFEEAKAEDEEELQRISDGINMNSHQEVFASLFHKVSCSPASAQLLSVLQGLMHLEPAGRSGQLLWEALENLVNRAVLLASDAQACTLEEVVERLLSIKGRPRPSPLDKAHKSVQTNSVQNQGSSSQNTTTPTTKVEGQQPVVASPCQHVGSIQSSSVDIAPQPVALEQCITALPLPTPPLSSSTPVLPPTPPPLPGPGATSPLPPPPPPLPPPLPGSGTTSPPPPPPPPPPLPPPLPGSGTISPPPPPPPPPLPGTGAVSPPPPPPLPSLPDSHKTQPPPPPPPPLPGMCPVPPPPPLPRAGQIPPPPPLPGFSVPSMMGGVEEIIVAQVDHSLGSAWVPSHRRVNPPTLRMKKLNWQKLPSNVARERNSMWATLGSPCTAAVEPDFSSIEQLFSFPTAKPKEPSAAPARKEPKEVTFLDSKKSLNLNIFLKQFKCSNEEVTSMIQAGDTSKFDVEVLKQLLKLLPEKHEIENLRAFTEERAKLSNADQFYVLLLDIPCYPLRVECMMLCEGTAIVLDMVRPKAQLVLTACESLLTSQRLPVFCQLILKIGNFLNYGSHTGDADGFKISTLLKLTETKSQQSRVTLLHHVLEEVEKSHPDLLQLSRDLEPPSQAAGINVEIIHSEASANLKKLLEAERKVSASIPEVQKQYAERLQASIEASQELDKVFDAIEQKKLELADYLCEDPQQLSLEDTFSTMKTFRDLFTRALKENKDRKEQMAKAERRKQQLAEEEARRPRDEDGKPIRKGPGKQEEVCVIDALLADIRKGFQLRKTARGRGDTEASGRVAPTDPPKATEPATASNPTQGTNHPASEPLDTTAADEPQGWDLVDAVTPSPQPSKEEDGPPALERRSSWYVDAIDFLDPEDTPDAQPSEGVWPVTLGDGQALNPLEFSSNKPPGVKSSHQDATDPEALWGVHQTEADSTSEGPEDEAQRGQSTHLPRTGPGEDEDGEDTAPESALDTSLDRSFSEDAVTDSSGSGTLPRVQGRVSKGTSKRRKKRPSRNQEEFVPDSDDIKAKRLCVIQ</sequence>
<evidence type="ECO:0000250" key="1"/>
<evidence type="ECO:0000250" key="2">
    <source>
        <dbReference type="UniProtKB" id="Q27J81"/>
    </source>
</evidence>
<evidence type="ECO:0000255" key="3"/>
<evidence type="ECO:0000255" key="4">
    <source>
        <dbReference type="PROSITE-ProRule" id="PRU00406"/>
    </source>
</evidence>
<evidence type="ECO:0000255" key="5">
    <source>
        <dbReference type="PROSITE-ProRule" id="PRU00579"/>
    </source>
</evidence>
<evidence type="ECO:0000255" key="6">
    <source>
        <dbReference type="PROSITE-ProRule" id="PRU00774"/>
    </source>
</evidence>
<evidence type="ECO:0000256" key="7">
    <source>
        <dbReference type="SAM" id="MobiDB-lite"/>
    </source>
</evidence>
<evidence type="ECO:0000269" key="8">
    <source>
    </source>
</evidence>
<evidence type="ECO:0000303" key="9">
    <source>
    </source>
</evidence>
<evidence type="ECO:0000305" key="10"/>
<evidence type="ECO:0007744" key="11">
    <source>
    </source>
</evidence>
<evidence type="ECO:0007744" key="12">
    <source>
    </source>
</evidence>
<proteinExistence type="evidence at protein level"/>
<comment type="function">
    <text evidence="8">Severs actin filaments and accelerates their polymerization and depolymerization.</text>
</comment>
<comment type="activity regulation">
    <text evidence="8">Phosphate inhibits both the depolymerization and severing activities.</text>
</comment>
<comment type="subunit">
    <text evidence="2 8">Interacts with profilin and actin at the FH1 and FH2 domains respectively. Interacts with DAAM2 (By similarity).</text>
</comment>
<comment type="subcellular location">
    <subcellularLocation>
        <location evidence="1">Cytoplasm</location>
        <location evidence="1">Perinuclear region</location>
    </subcellularLocation>
</comment>
<comment type="alternative products">
    <event type="alternative splicing"/>
    <isoform>
        <id>Q0GNC1-1</id>
        <name>1</name>
        <sequence type="displayed"/>
    </isoform>
    <isoform>
        <id>Q0GNC1-3</id>
        <name>2</name>
        <sequence type="described" ref="VSP_021560"/>
    </isoform>
</comment>
<comment type="domain">
    <text evidence="8">The WH2 domain acts as the DAD (diaphanous autoregulatory) domain and binds to actin monomers.</text>
</comment>
<comment type="domain">
    <text evidence="8">Regulated by autoinhibition due to intramolecular GBD-DAD binding.</text>
</comment>
<comment type="domain">
    <text evidence="8">The severing activity is dependent on covalent attachment of the FH2 domain to the C-terminus.</text>
</comment>
<comment type="similarity">
    <text evidence="10">Belongs to the formin homology family.</text>
</comment>
<comment type="sequence caution" evidence="10">
    <conflict type="erroneous initiation">
        <sequence resource="EMBL-CDS" id="AAH60610"/>
    </conflict>
    <text>Extended N-terminus.</text>
</comment>
<comment type="sequence caution" evidence="10">
    <conflict type="erroneous initiation">
        <sequence resource="EMBL-CDS" id="AAH99931"/>
    </conflict>
    <text>Truncated N-terminus.</text>
</comment>